<sequence>MAEYTLPDLDYDYGALEPHISGQINELHHSKHHAAYVKGVNDAVAKLDEARANGDHAAIFLNEKNLAFHLGGHVNHSIWWKNLSPNGGDKPTGDLAAAIDDQFGSFDKFQAQFTAAANGLQGSGWAVLGYDSLGDRLLTFQLYDQQANVPLGIIPLLQVDMWEHAFYLQYKNVKADYVKAFWNVVNWEDVQNRYAAATSKTNGLIFG</sequence>
<organism>
    <name type="scientific">Mycolicibacterium fortuitum</name>
    <name type="common">Mycobacterium fortuitum</name>
    <dbReference type="NCBI Taxonomy" id="1766"/>
    <lineage>
        <taxon>Bacteria</taxon>
        <taxon>Bacillati</taxon>
        <taxon>Actinomycetota</taxon>
        <taxon>Actinomycetes</taxon>
        <taxon>Mycobacteriales</taxon>
        <taxon>Mycobacteriaceae</taxon>
        <taxon>Mycolicibacterium</taxon>
    </lineage>
</organism>
<accession>Q59519</accession>
<dbReference type="EC" id="1.15.1.1"/>
<dbReference type="EMBL" id="X70914">
    <property type="protein sequence ID" value="CAA50266.1"/>
    <property type="molecule type" value="Genomic_DNA"/>
</dbReference>
<dbReference type="PIR" id="S60669">
    <property type="entry name" value="S60669"/>
</dbReference>
<dbReference type="RefSeq" id="WP_003883955.1">
    <property type="nucleotide sequence ID" value="NZ_VHPZ01000118.1"/>
</dbReference>
<dbReference type="SMR" id="Q59519"/>
<dbReference type="STRING" id="1766.XA26_58210"/>
<dbReference type="OrthoDB" id="9803125at2"/>
<dbReference type="GO" id="GO:0046872">
    <property type="term" value="F:metal ion binding"/>
    <property type="evidence" value="ECO:0007669"/>
    <property type="project" value="UniProtKB-KW"/>
</dbReference>
<dbReference type="GO" id="GO:0004784">
    <property type="term" value="F:superoxide dismutase activity"/>
    <property type="evidence" value="ECO:0007669"/>
    <property type="project" value="UniProtKB-EC"/>
</dbReference>
<dbReference type="FunFam" id="1.10.287.990:FF:000001">
    <property type="entry name" value="Superoxide dismutase"/>
    <property type="match status" value="1"/>
</dbReference>
<dbReference type="FunFam" id="3.55.40.20:FF:000004">
    <property type="entry name" value="Superoxide dismutase [Fe]"/>
    <property type="match status" value="1"/>
</dbReference>
<dbReference type="Gene3D" id="1.10.287.990">
    <property type="entry name" value="Fe,Mn superoxide dismutase (SOD) domain"/>
    <property type="match status" value="1"/>
</dbReference>
<dbReference type="Gene3D" id="3.55.40.20">
    <property type="entry name" value="Iron/manganese superoxide dismutase, C-terminal domain"/>
    <property type="match status" value="1"/>
</dbReference>
<dbReference type="InterPro" id="IPR050265">
    <property type="entry name" value="Fe/Mn_Superoxide_Dismutase"/>
</dbReference>
<dbReference type="InterPro" id="IPR001189">
    <property type="entry name" value="Mn/Fe_SOD"/>
</dbReference>
<dbReference type="InterPro" id="IPR019833">
    <property type="entry name" value="Mn/Fe_SOD_BS"/>
</dbReference>
<dbReference type="InterPro" id="IPR019832">
    <property type="entry name" value="Mn/Fe_SOD_C"/>
</dbReference>
<dbReference type="InterPro" id="IPR019831">
    <property type="entry name" value="Mn/Fe_SOD_N"/>
</dbReference>
<dbReference type="InterPro" id="IPR036324">
    <property type="entry name" value="Mn/Fe_SOD_N_sf"/>
</dbReference>
<dbReference type="InterPro" id="IPR036314">
    <property type="entry name" value="SOD_C_sf"/>
</dbReference>
<dbReference type="PANTHER" id="PTHR11404">
    <property type="entry name" value="SUPEROXIDE DISMUTASE 2"/>
    <property type="match status" value="1"/>
</dbReference>
<dbReference type="PANTHER" id="PTHR11404:SF6">
    <property type="entry name" value="SUPEROXIDE DISMUTASE [MN], MITOCHONDRIAL"/>
    <property type="match status" value="1"/>
</dbReference>
<dbReference type="Pfam" id="PF02777">
    <property type="entry name" value="Sod_Fe_C"/>
    <property type="match status" value="1"/>
</dbReference>
<dbReference type="Pfam" id="PF00081">
    <property type="entry name" value="Sod_Fe_N"/>
    <property type="match status" value="1"/>
</dbReference>
<dbReference type="PIRSF" id="PIRSF000349">
    <property type="entry name" value="SODismutase"/>
    <property type="match status" value="1"/>
</dbReference>
<dbReference type="PRINTS" id="PR01703">
    <property type="entry name" value="MNSODISMTASE"/>
</dbReference>
<dbReference type="SUPFAM" id="SSF54719">
    <property type="entry name" value="Fe,Mn superoxide dismutase (SOD), C-terminal domain"/>
    <property type="match status" value="1"/>
</dbReference>
<dbReference type="SUPFAM" id="SSF46609">
    <property type="entry name" value="Fe,Mn superoxide dismutase (SOD), N-terminal domain"/>
    <property type="match status" value="1"/>
</dbReference>
<dbReference type="PROSITE" id="PS00088">
    <property type="entry name" value="SOD_MN"/>
    <property type="match status" value="1"/>
</dbReference>
<gene>
    <name type="primary">sodA</name>
    <name type="synonym">sod</name>
</gene>
<evidence type="ECO:0000250" key="1"/>
<evidence type="ECO:0000305" key="2"/>
<proteinExistence type="inferred from homology"/>
<name>SODM_MYCFO</name>
<protein>
    <recommendedName>
        <fullName>Superoxide dismutase [Mn]</fullName>
        <ecNumber>1.15.1.1</ecNumber>
    </recommendedName>
</protein>
<comment type="function">
    <text>Destroys superoxide anion radicals which are normally produced within the cells and which are toxic to biological systems.</text>
</comment>
<comment type="catalytic activity">
    <reaction>
        <text>2 superoxide + 2 H(+) = H2O2 + O2</text>
        <dbReference type="Rhea" id="RHEA:20696"/>
        <dbReference type="ChEBI" id="CHEBI:15378"/>
        <dbReference type="ChEBI" id="CHEBI:15379"/>
        <dbReference type="ChEBI" id="CHEBI:16240"/>
        <dbReference type="ChEBI" id="CHEBI:18421"/>
        <dbReference type="EC" id="1.15.1.1"/>
    </reaction>
</comment>
<comment type="cofactor">
    <cofactor evidence="1">
        <name>Mn(2+)</name>
        <dbReference type="ChEBI" id="CHEBI:29035"/>
    </cofactor>
    <text evidence="1">Binds 1 Mn(2+) ion per subunit.</text>
</comment>
<comment type="similarity">
    <text evidence="2">Belongs to the iron/manganese superoxide dismutase family.</text>
</comment>
<keyword id="KW-0464">Manganese</keyword>
<keyword id="KW-0479">Metal-binding</keyword>
<keyword id="KW-0560">Oxidoreductase</keyword>
<reference key="1">
    <citation type="journal article" date="1995" name="FEMS Microbiol. Lett.">
        <title>Cloning and expression of the Mycobacterium fortuitum superoxide dismutase gene.</title>
        <authorList>
            <person name="Menendez M.C."/>
            <person name="Domenech P."/>
            <person name="Prieto J."/>
            <person name="Garcia M.J."/>
        </authorList>
    </citation>
    <scope>NUCLEOTIDE SEQUENCE [GENOMIC DNA]</scope>
    <source>
        <strain>ATCC 6841 / DSM 46621 / CIP 104534 / JCM 6387 / KCTC 9510 / NBRC 13159 / NCTC 10394</strain>
    </source>
</reference>
<feature type="initiator methionine" description="Removed" evidence="1">
    <location>
        <position position="1"/>
    </location>
</feature>
<feature type="chain" id="PRO_0000160048" description="Superoxide dismutase [Mn]">
    <location>
        <begin position="2"/>
        <end position="207"/>
    </location>
</feature>
<feature type="binding site" evidence="1">
    <location>
        <position position="28"/>
    </location>
    <ligand>
        <name>Mn(2+)</name>
        <dbReference type="ChEBI" id="CHEBI:29035"/>
    </ligand>
</feature>
<feature type="binding site" evidence="1">
    <location>
        <position position="76"/>
    </location>
    <ligand>
        <name>Mn(2+)</name>
        <dbReference type="ChEBI" id="CHEBI:29035"/>
    </ligand>
</feature>
<feature type="binding site" evidence="1">
    <location>
        <position position="160"/>
    </location>
    <ligand>
        <name>Mn(2+)</name>
        <dbReference type="ChEBI" id="CHEBI:29035"/>
    </ligand>
</feature>
<feature type="binding site" evidence="1">
    <location>
        <position position="164"/>
    </location>
    <ligand>
        <name>Mn(2+)</name>
        <dbReference type="ChEBI" id="CHEBI:29035"/>
    </ligand>
</feature>